<reference key="1">
    <citation type="journal article" date="2008" name="PLoS ONE">
        <title>A recalibrated molecular clock and independent origins for the cholera pandemic clones.</title>
        <authorList>
            <person name="Feng L."/>
            <person name="Reeves P.R."/>
            <person name="Lan R."/>
            <person name="Ren Y."/>
            <person name="Gao C."/>
            <person name="Zhou Z."/>
            <person name="Ren Y."/>
            <person name="Cheng J."/>
            <person name="Wang W."/>
            <person name="Wang J."/>
            <person name="Qian W."/>
            <person name="Li D."/>
            <person name="Wang L."/>
        </authorList>
    </citation>
    <scope>NUCLEOTIDE SEQUENCE [LARGE SCALE GENOMIC DNA]</scope>
    <source>
        <strain>M66-2</strain>
    </source>
</reference>
<protein>
    <recommendedName>
        <fullName evidence="1">Methylglyoxal synthase</fullName>
        <shortName evidence="1">MGS</shortName>
        <ecNumber evidence="1">4.2.3.3</ecNumber>
    </recommendedName>
</protein>
<evidence type="ECO:0000255" key="1">
    <source>
        <dbReference type="HAMAP-Rule" id="MF_00549"/>
    </source>
</evidence>
<gene>
    <name evidence="1" type="primary">mgsA</name>
    <name type="ordered locus">VCM66_A0669</name>
</gene>
<proteinExistence type="inferred from homology"/>
<keyword id="KW-0456">Lyase</keyword>
<organism>
    <name type="scientific">Vibrio cholerae serotype O1 (strain M66-2)</name>
    <dbReference type="NCBI Taxonomy" id="579112"/>
    <lineage>
        <taxon>Bacteria</taxon>
        <taxon>Pseudomonadati</taxon>
        <taxon>Pseudomonadota</taxon>
        <taxon>Gammaproteobacteria</taxon>
        <taxon>Vibrionales</taxon>
        <taxon>Vibrionaceae</taxon>
        <taxon>Vibrio</taxon>
    </lineage>
</organism>
<name>MGSA_VIBCM</name>
<sequence>MKKTTRTMAAHKHVALVAHDNCKGELLRWVTENKEKLQRHFLYATGTTGHMLSKETGLAIKSMISGPMGGDQQLGALISEGKIDVLIFFWDPLNAVPHDPDVKALLRIASVWNIPVATNRASAKFLFSSSLMEQEVQIEIPDYQAYLAERT</sequence>
<comment type="function">
    <text evidence="1">Catalyzes the formation of methylglyoxal from dihydroxyacetone phosphate.</text>
</comment>
<comment type="catalytic activity">
    <reaction evidence="1">
        <text>dihydroxyacetone phosphate = methylglyoxal + phosphate</text>
        <dbReference type="Rhea" id="RHEA:17937"/>
        <dbReference type="ChEBI" id="CHEBI:17158"/>
        <dbReference type="ChEBI" id="CHEBI:43474"/>
        <dbReference type="ChEBI" id="CHEBI:57642"/>
        <dbReference type="EC" id="4.2.3.3"/>
    </reaction>
</comment>
<comment type="similarity">
    <text evidence="1">Belongs to the methylglyoxal synthase family.</text>
</comment>
<accession>C3LVX6</accession>
<dbReference type="EC" id="4.2.3.3" evidence="1"/>
<dbReference type="EMBL" id="CP001234">
    <property type="protein sequence ID" value="ACP07631.1"/>
    <property type="molecule type" value="Genomic_DNA"/>
</dbReference>
<dbReference type="RefSeq" id="WP_000754102.1">
    <property type="nucleotide sequence ID" value="NC_012580.1"/>
</dbReference>
<dbReference type="SMR" id="C3LVX6"/>
<dbReference type="KEGG" id="vcm:VCM66_A0669"/>
<dbReference type="HOGENOM" id="CLU_120420_0_1_6"/>
<dbReference type="Proteomes" id="UP000001217">
    <property type="component" value="Chromosome II"/>
</dbReference>
<dbReference type="GO" id="GO:0005829">
    <property type="term" value="C:cytosol"/>
    <property type="evidence" value="ECO:0007669"/>
    <property type="project" value="TreeGrafter"/>
</dbReference>
<dbReference type="GO" id="GO:0008929">
    <property type="term" value="F:methylglyoxal synthase activity"/>
    <property type="evidence" value="ECO:0007669"/>
    <property type="project" value="UniProtKB-UniRule"/>
</dbReference>
<dbReference type="GO" id="GO:0019242">
    <property type="term" value="P:methylglyoxal biosynthetic process"/>
    <property type="evidence" value="ECO:0007669"/>
    <property type="project" value="UniProtKB-UniRule"/>
</dbReference>
<dbReference type="CDD" id="cd01422">
    <property type="entry name" value="MGS"/>
    <property type="match status" value="1"/>
</dbReference>
<dbReference type="FunFam" id="3.40.50.1380:FF:000002">
    <property type="entry name" value="Methylglyoxal synthase"/>
    <property type="match status" value="1"/>
</dbReference>
<dbReference type="Gene3D" id="3.40.50.1380">
    <property type="entry name" value="Methylglyoxal synthase-like domain"/>
    <property type="match status" value="1"/>
</dbReference>
<dbReference type="HAMAP" id="MF_00549">
    <property type="entry name" value="Methylglyoxal_synth"/>
    <property type="match status" value="1"/>
</dbReference>
<dbReference type="InterPro" id="IPR004363">
    <property type="entry name" value="Methylgl_synth"/>
</dbReference>
<dbReference type="InterPro" id="IPR018148">
    <property type="entry name" value="Methylglyoxal_synth_AS"/>
</dbReference>
<dbReference type="InterPro" id="IPR011607">
    <property type="entry name" value="MGS-like_dom"/>
</dbReference>
<dbReference type="InterPro" id="IPR036914">
    <property type="entry name" value="MGS-like_dom_sf"/>
</dbReference>
<dbReference type="NCBIfam" id="TIGR00160">
    <property type="entry name" value="MGSA"/>
    <property type="match status" value="1"/>
</dbReference>
<dbReference type="NCBIfam" id="NF003559">
    <property type="entry name" value="PRK05234.1"/>
    <property type="match status" value="1"/>
</dbReference>
<dbReference type="PANTHER" id="PTHR30492">
    <property type="entry name" value="METHYLGLYOXAL SYNTHASE"/>
    <property type="match status" value="1"/>
</dbReference>
<dbReference type="PANTHER" id="PTHR30492:SF0">
    <property type="entry name" value="METHYLGLYOXAL SYNTHASE"/>
    <property type="match status" value="1"/>
</dbReference>
<dbReference type="Pfam" id="PF02142">
    <property type="entry name" value="MGS"/>
    <property type="match status" value="1"/>
</dbReference>
<dbReference type="PIRSF" id="PIRSF006614">
    <property type="entry name" value="Methylglyox_syn"/>
    <property type="match status" value="1"/>
</dbReference>
<dbReference type="SMART" id="SM00851">
    <property type="entry name" value="MGS"/>
    <property type="match status" value="1"/>
</dbReference>
<dbReference type="SUPFAM" id="SSF52335">
    <property type="entry name" value="Methylglyoxal synthase-like"/>
    <property type="match status" value="1"/>
</dbReference>
<dbReference type="PROSITE" id="PS01335">
    <property type="entry name" value="METHYLGLYOXAL_SYNTH"/>
    <property type="match status" value="1"/>
</dbReference>
<dbReference type="PROSITE" id="PS51855">
    <property type="entry name" value="MGS"/>
    <property type="match status" value="1"/>
</dbReference>
<feature type="chain" id="PRO_1000146631" description="Methylglyoxal synthase">
    <location>
        <begin position="1"/>
        <end position="151"/>
    </location>
</feature>
<feature type="domain" description="MGS-like" evidence="1">
    <location>
        <begin position="1"/>
        <end position="151"/>
    </location>
</feature>
<feature type="active site" description="Proton donor/acceptor" evidence="1">
    <location>
        <position position="71"/>
    </location>
</feature>
<feature type="binding site" evidence="1">
    <location>
        <position position="19"/>
    </location>
    <ligand>
        <name>substrate</name>
    </ligand>
</feature>
<feature type="binding site" evidence="1">
    <location>
        <position position="23"/>
    </location>
    <ligand>
        <name>substrate</name>
    </ligand>
</feature>
<feature type="binding site" evidence="1">
    <location>
        <begin position="45"/>
        <end position="48"/>
    </location>
    <ligand>
        <name>substrate</name>
    </ligand>
</feature>
<feature type="binding site" evidence="1">
    <location>
        <begin position="65"/>
        <end position="66"/>
    </location>
    <ligand>
        <name>substrate</name>
    </ligand>
</feature>
<feature type="binding site" evidence="1">
    <location>
        <position position="98"/>
    </location>
    <ligand>
        <name>substrate</name>
    </ligand>
</feature>